<name>Y620_CALBD</name>
<sequence>MFLEVETHCHTIASGHAYNNLEEMVLEAQKKGLKGICITDHGPEMPGSCSSLYFYNLIVVPRKINGIMVFRGCEANIVDYEGRIDIPEDALKRLDFVIASLHDVCIPSGTVSDHTRALIGAIKNPYIHCIGHPGNPLYEIDKEEVVLAAKEYKKAIEINNSSFYVREKSKENCIEILKLCKKYGVYIAMGSDAHYKADIGRCEITQKLVCEYEFPPELIVNKSLESFISFLKLHGKDIDI</sequence>
<reference key="1">
    <citation type="submission" date="1996-02" db="EMBL/GenBank/DDBJ databases">
        <authorList>
            <person name="Zverlov V.V."/>
            <person name="Bronnenmeier K."/>
            <person name="Velikodvorskaya G.A."/>
        </authorList>
    </citation>
    <scope>NUCLEOTIDE SEQUENCE [GENOMIC DNA]</scope>
</reference>
<reference key="2">
    <citation type="submission" date="2009-01" db="EMBL/GenBank/DDBJ databases">
        <title>Complete sequence of chromosome of Caldicellulosiruptor becscii DSM 6725.</title>
        <authorList>
            <person name="Lucas S."/>
            <person name="Copeland A."/>
            <person name="Lapidus A."/>
            <person name="Glavina del Rio T."/>
            <person name="Tice H."/>
            <person name="Bruce D."/>
            <person name="Goodwin L."/>
            <person name="Pitluck S."/>
            <person name="Sims D."/>
            <person name="Meincke L."/>
            <person name="Brettin T."/>
            <person name="Detter J.C."/>
            <person name="Han C."/>
            <person name="Larimer F."/>
            <person name="Land M."/>
            <person name="Hauser L."/>
            <person name="Kyrpides N."/>
            <person name="Ovchinnikova G."/>
            <person name="Kataeva I."/>
            <person name="Adams M.W.W."/>
        </authorList>
    </citation>
    <scope>NUCLEOTIDE SEQUENCE [LARGE SCALE GENOMIC DNA]</scope>
    <source>
        <strain>ATCC BAA-1888 / DSM 6725 / KCTC 15123 / Z-1320</strain>
    </source>
</reference>
<organism>
    <name type="scientific">Caldicellulosiruptor bescii (strain ATCC BAA-1888 / DSM 6725 / KCTC 15123 / Z-1320)</name>
    <name type="common">Anaerocellum thermophilum</name>
    <dbReference type="NCBI Taxonomy" id="521460"/>
    <lineage>
        <taxon>Bacteria</taxon>
        <taxon>Bacillati</taxon>
        <taxon>Bacillota</taxon>
        <taxon>Bacillota incertae sedis</taxon>
        <taxon>Caldicellulosiruptorales</taxon>
        <taxon>Caldicellulosiruptoraceae</taxon>
        <taxon>Caldicellulosiruptor</taxon>
    </lineage>
</organism>
<accession>Q44408</accession>
<accession>B9MPI3</accession>
<keyword id="KW-0378">Hydrolase</keyword>
<keyword id="KW-0479">Metal-binding</keyword>
<keyword id="KW-0862">Zinc</keyword>
<comment type="cofactor">
    <cofactor evidence="1">
        <name>Zn(2+)</name>
        <dbReference type="ChEBI" id="CHEBI:29105"/>
    </cofactor>
    <text evidence="1">Binds 3 Zn(2+) ions per subunit.</text>
</comment>
<comment type="similarity">
    <text evidence="1">Belongs to the PHP family.</text>
</comment>
<comment type="sequence caution" evidence="2">
    <conflict type="erroneous initiation">
        <sequence resource="EMBL-CDS" id="CAA93629"/>
    </conflict>
</comment>
<evidence type="ECO:0000255" key="1">
    <source>
        <dbReference type="HAMAP-Rule" id="MF_01561"/>
    </source>
</evidence>
<evidence type="ECO:0000305" key="2"/>
<feature type="chain" id="PRO_0000066374" description="Probable phosphatase Athe_0620">
    <location>
        <begin position="1"/>
        <end position="240"/>
    </location>
</feature>
<feature type="binding site" evidence="1">
    <location>
        <position position="8"/>
    </location>
    <ligand>
        <name>Zn(2+)</name>
        <dbReference type="ChEBI" id="CHEBI:29105"/>
        <label>1</label>
    </ligand>
</feature>
<feature type="binding site" evidence="1">
    <location>
        <position position="10"/>
    </location>
    <ligand>
        <name>Zn(2+)</name>
        <dbReference type="ChEBI" id="CHEBI:29105"/>
        <label>1</label>
    </ligand>
</feature>
<feature type="binding site" evidence="1">
    <location>
        <position position="16"/>
    </location>
    <ligand>
        <name>Zn(2+)</name>
        <dbReference type="ChEBI" id="CHEBI:29105"/>
        <label>2</label>
    </ligand>
</feature>
<feature type="binding site" evidence="1">
    <location>
        <position position="41"/>
    </location>
    <ligand>
        <name>Zn(2+)</name>
        <dbReference type="ChEBI" id="CHEBI:29105"/>
        <label>2</label>
    </ligand>
</feature>
<feature type="binding site" evidence="1">
    <location>
        <position position="74"/>
    </location>
    <ligand>
        <name>Zn(2+)</name>
        <dbReference type="ChEBI" id="CHEBI:29105"/>
        <label>1</label>
    </ligand>
</feature>
<feature type="binding site" evidence="1">
    <location>
        <position position="74"/>
    </location>
    <ligand>
        <name>Zn(2+)</name>
        <dbReference type="ChEBI" id="CHEBI:29105"/>
        <label>3</label>
    </ligand>
</feature>
<feature type="binding site" evidence="1">
    <location>
        <position position="102"/>
    </location>
    <ligand>
        <name>Zn(2+)</name>
        <dbReference type="ChEBI" id="CHEBI:29105"/>
        <label>3</label>
    </ligand>
</feature>
<feature type="binding site" evidence="1">
    <location>
        <position position="132"/>
    </location>
    <ligand>
        <name>Zn(2+)</name>
        <dbReference type="ChEBI" id="CHEBI:29105"/>
        <label>3</label>
    </ligand>
</feature>
<feature type="binding site" evidence="1">
    <location>
        <position position="192"/>
    </location>
    <ligand>
        <name>Zn(2+)</name>
        <dbReference type="ChEBI" id="CHEBI:29105"/>
        <label>1</label>
    </ligand>
</feature>
<feature type="binding site" evidence="1">
    <location>
        <position position="194"/>
    </location>
    <ligand>
        <name>Zn(2+)</name>
        <dbReference type="ChEBI" id="CHEBI:29105"/>
        <label>2</label>
    </ligand>
</feature>
<feature type="sequence conflict" description="In Ref. 1; CAA93629." evidence="2" ref="1">
    <original>S</original>
    <variation>G</variation>
    <location>
        <position position="223"/>
    </location>
</feature>
<gene>
    <name type="ordered locus">Athe_0620</name>
</gene>
<dbReference type="EC" id="3.1.3.-" evidence="1"/>
<dbReference type="EMBL" id="Z69782">
    <property type="protein sequence ID" value="CAA93629.1"/>
    <property type="status" value="ALT_INIT"/>
    <property type="molecule type" value="Genomic_DNA"/>
</dbReference>
<dbReference type="EMBL" id="CP001393">
    <property type="protein sequence ID" value="ACM59744.1"/>
    <property type="molecule type" value="Genomic_DNA"/>
</dbReference>
<dbReference type="RefSeq" id="WP_015907197.1">
    <property type="nucleotide sequence ID" value="NC_012034.1"/>
</dbReference>
<dbReference type="SMR" id="Q44408"/>
<dbReference type="STRING" id="521460.Athe_0620"/>
<dbReference type="GeneID" id="31771975"/>
<dbReference type="KEGG" id="ate:Athe_0620"/>
<dbReference type="eggNOG" id="COG1387">
    <property type="taxonomic scope" value="Bacteria"/>
</dbReference>
<dbReference type="HOGENOM" id="CLU_061999_0_1_9"/>
<dbReference type="Proteomes" id="UP000007723">
    <property type="component" value="Chromosome"/>
</dbReference>
<dbReference type="GO" id="GO:0005829">
    <property type="term" value="C:cytosol"/>
    <property type="evidence" value="ECO:0007669"/>
    <property type="project" value="TreeGrafter"/>
</dbReference>
<dbReference type="GO" id="GO:0042578">
    <property type="term" value="F:phosphoric ester hydrolase activity"/>
    <property type="evidence" value="ECO:0007669"/>
    <property type="project" value="TreeGrafter"/>
</dbReference>
<dbReference type="GO" id="GO:0008270">
    <property type="term" value="F:zinc ion binding"/>
    <property type="evidence" value="ECO:0007669"/>
    <property type="project" value="InterPro"/>
</dbReference>
<dbReference type="CDD" id="cd07437">
    <property type="entry name" value="PHP_HisPPase_Ycdx_like"/>
    <property type="match status" value="1"/>
</dbReference>
<dbReference type="Gene3D" id="3.20.20.140">
    <property type="entry name" value="Metal-dependent hydrolases"/>
    <property type="match status" value="1"/>
</dbReference>
<dbReference type="HAMAP" id="MF_01561">
    <property type="entry name" value="YcdX_phosphat"/>
    <property type="match status" value="1"/>
</dbReference>
<dbReference type="InterPro" id="IPR023710">
    <property type="entry name" value="Phosphatase_YcdX_put"/>
</dbReference>
<dbReference type="InterPro" id="IPR004013">
    <property type="entry name" value="PHP_dom"/>
</dbReference>
<dbReference type="InterPro" id="IPR050243">
    <property type="entry name" value="PHP_phosphatase"/>
</dbReference>
<dbReference type="InterPro" id="IPR003141">
    <property type="entry name" value="Pol/His_phosphatase_N"/>
</dbReference>
<dbReference type="InterPro" id="IPR016195">
    <property type="entry name" value="Pol/histidinol_Pase-like"/>
</dbReference>
<dbReference type="NCBIfam" id="NF006702">
    <property type="entry name" value="PRK09248.1"/>
    <property type="match status" value="1"/>
</dbReference>
<dbReference type="PANTHER" id="PTHR36928">
    <property type="entry name" value="PHOSPHATASE YCDX-RELATED"/>
    <property type="match status" value="1"/>
</dbReference>
<dbReference type="PANTHER" id="PTHR36928:SF1">
    <property type="entry name" value="PHOSPHATASE YCDX-RELATED"/>
    <property type="match status" value="1"/>
</dbReference>
<dbReference type="Pfam" id="PF02811">
    <property type="entry name" value="PHP"/>
    <property type="match status" value="1"/>
</dbReference>
<dbReference type="SMART" id="SM00481">
    <property type="entry name" value="POLIIIAc"/>
    <property type="match status" value="1"/>
</dbReference>
<dbReference type="SUPFAM" id="SSF89550">
    <property type="entry name" value="PHP domain-like"/>
    <property type="match status" value="1"/>
</dbReference>
<protein>
    <recommendedName>
        <fullName evidence="1">Probable phosphatase Athe_0620</fullName>
        <ecNumber evidence="1">3.1.3.-</ecNumber>
    </recommendedName>
</protein>
<proteinExistence type="inferred from homology"/>